<feature type="chain" id="PRO_0000355751" description="Ribulose bisphosphate carboxylase large chain">
    <location>
        <begin position="1"/>
        <end position="471"/>
    </location>
</feature>
<feature type="active site" description="Proton acceptor" evidence="1">
    <location>
        <position position="171"/>
    </location>
</feature>
<feature type="active site" description="Proton acceptor" evidence="1">
    <location>
        <position position="290"/>
    </location>
</feature>
<feature type="binding site" description="in homodimeric partner" evidence="1">
    <location>
        <position position="119"/>
    </location>
    <ligand>
        <name>substrate</name>
    </ligand>
</feature>
<feature type="binding site" evidence="1">
    <location>
        <position position="169"/>
    </location>
    <ligand>
        <name>substrate</name>
    </ligand>
</feature>
<feature type="binding site" evidence="1">
    <location>
        <position position="173"/>
    </location>
    <ligand>
        <name>substrate</name>
    </ligand>
</feature>
<feature type="binding site" description="via carbamate group" evidence="1">
    <location>
        <position position="197"/>
    </location>
    <ligand>
        <name>Mg(2+)</name>
        <dbReference type="ChEBI" id="CHEBI:18420"/>
    </ligand>
</feature>
<feature type="binding site" evidence="1">
    <location>
        <position position="199"/>
    </location>
    <ligand>
        <name>Mg(2+)</name>
        <dbReference type="ChEBI" id="CHEBI:18420"/>
    </ligand>
</feature>
<feature type="binding site" evidence="1">
    <location>
        <position position="200"/>
    </location>
    <ligand>
        <name>Mg(2+)</name>
        <dbReference type="ChEBI" id="CHEBI:18420"/>
    </ligand>
</feature>
<feature type="binding site" evidence="1">
    <location>
        <position position="291"/>
    </location>
    <ligand>
        <name>substrate</name>
    </ligand>
</feature>
<feature type="binding site" evidence="1">
    <location>
        <position position="323"/>
    </location>
    <ligand>
        <name>substrate</name>
    </ligand>
</feature>
<feature type="binding site" evidence="1">
    <location>
        <position position="375"/>
    </location>
    <ligand>
        <name>substrate</name>
    </ligand>
</feature>
<feature type="site" description="Transition state stabilizer" evidence="1">
    <location>
        <position position="330"/>
    </location>
</feature>
<feature type="modified residue" description="N6-carboxylysine" evidence="1">
    <location>
        <position position="197"/>
    </location>
</feature>
<feature type="disulfide bond" description="Interchain; in linked form" evidence="1">
    <location>
        <position position="243"/>
    </location>
</feature>
<dbReference type="EC" id="4.1.1.39" evidence="1"/>
<dbReference type="EMBL" id="AP009552">
    <property type="protein sequence ID" value="BAG04611.1"/>
    <property type="molecule type" value="Genomic_DNA"/>
</dbReference>
<dbReference type="RefSeq" id="WP_002753365.1">
    <property type="nucleotide sequence ID" value="NC_010296.1"/>
</dbReference>
<dbReference type="SMR" id="B0JVL8"/>
<dbReference type="STRING" id="449447.MAE_47890"/>
<dbReference type="PaxDb" id="449447-MAE_47890"/>
<dbReference type="EnsemblBacteria" id="BAG04611">
    <property type="protein sequence ID" value="BAG04611"/>
    <property type="gene ID" value="MAE_47890"/>
</dbReference>
<dbReference type="KEGG" id="mar:MAE_47890"/>
<dbReference type="eggNOG" id="COG1850">
    <property type="taxonomic scope" value="Bacteria"/>
</dbReference>
<dbReference type="HOGENOM" id="CLU_031450_2_0_3"/>
<dbReference type="BioCyc" id="MAER449447:MAE_RS20790-MONOMER"/>
<dbReference type="Proteomes" id="UP000001510">
    <property type="component" value="Chromosome"/>
</dbReference>
<dbReference type="GO" id="GO:0031470">
    <property type="term" value="C:carboxysome"/>
    <property type="evidence" value="ECO:0007669"/>
    <property type="project" value="UniProtKB-SubCell"/>
</dbReference>
<dbReference type="GO" id="GO:0000287">
    <property type="term" value="F:magnesium ion binding"/>
    <property type="evidence" value="ECO:0007669"/>
    <property type="project" value="UniProtKB-UniRule"/>
</dbReference>
<dbReference type="GO" id="GO:0004497">
    <property type="term" value="F:monooxygenase activity"/>
    <property type="evidence" value="ECO:0007669"/>
    <property type="project" value="UniProtKB-KW"/>
</dbReference>
<dbReference type="GO" id="GO:0016984">
    <property type="term" value="F:ribulose-bisphosphate carboxylase activity"/>
    <property type="evidence" value="ECO:0007669"/>
    <property type="project" value="UniProtKB-UniRule"/>
</dbReference>
<dbReference type="GO" id="GO:0009853">
    <property type="term" value="P:photorespiration"/>
    <property type="evidence" value="ECO:0007669"/>
    <property type="project" value="UniProtKB-KW"/>
</dbReference>
<dbReference type="GO" id="GO:0019253">
    <property type="term" value="P:reductive pentose-phosphate cycle"/>
    <property type="evidence" value="ECO:0007669"/>
    <property type="project" value="UniProtKB-UniRule"/>
</dbReference>
<dbReference type="CDD" id="cd08212">
    <property type="entry name" value="RuBisCO_large_I"/>
    <property type="match status" value="1"/>
</dbReference>
<dbReference type="Gene3D" id="3.20.20.110">
    <property type="entry name" value="Ribulose bisphosphate carboxylase, large subunit, C-terminal domain"/>
    <property type="match status" value="1"/>
</dbReference>
<dbReference type="Gene3D" id="3.30.70.150">
    <property type="entry name" value="RuBisCO large subunit, N-terminal domain"/>
    <property type="match status" value="1"/>
</dbReference>
<dbReference type="HAMAP" id="MF_01338">
    <property type="entry name" value="RuBisCO_L_type1"/>
    <property type="match status" value="1"/>
</dbReference>
<dbReference type="InterPro" id="IPR033966">
    <property type="entry name" value="RuBisCO"/>
</dbReference>
<dbReference type="InterPro" id="IPR020878">
    <property type="entry name" value="RuBisCo_large_chain_AS"/>
</dbReference>
<dbReference type="InterPro" id="IPR000685">
    <property type="entry name" value="RuBisCO_lsu_C"/>
</dbReference>
<dbReference type="InterPro" id="IPR036376">
    <property type="entry name" value="RuBisCO_lsu_C_sf"/>
</dbReference>
<dbReference type="InterPro" id="IPR017443">
    <property type="entry name" value="RuBisCO_lsu_fd_N"/>
</dbReference>
<dbReference type="InterPro" id="IPR036422">
    <property type="entry name" value="RuBisCO_lsu_N_sf"/>
</dbReference>
<dbReference type="InterPro" id="IPR020888">
    <property type="entry name" value="RuBisCO_lsuI"/>
</dbReference>
<dbReference type="NCBIfam" id="NF003252">
    <property type="entry name" value="PRK04208.1"/>
    <property type="match status" value="1"/>
</dbReference>
<dbReference type="PANTHER" id="PTHR42704">
    <property type="entry name" value="RIBULOSE BISPHOSPHATE CARBOXYLASE"/>
    <property type="match status" value="1"/>
</dbReference>
<dbReference type="PANTHER" id="PTHR42704:SF17">
    <property type="entry name" value="RIBULOSE BISPHOSPHATE CARBOXYLASE LARGE CHAIN"/>
    <property type="match status" value="1"/>
</dbReference>
<dbReference type="Pfam" id="PF00016">
    <property type="entry name" value="RuBisCO_large"/>
    <property type="match status" value="1"/>
</dbReference>
<dbReference type="Pfam" id="PF02788">
    <property type="entry name" value="RuBisCO_large_N"/>
    <property type="match status" value="1"/>
</dbReference>
<dbReference type="SFLD" id="SFLDG01052">
    <property type="entry name" value="RuBisCO"/>
    <property type="match status" value="1"/>
</dbReference>
<dbReference type="SFLD" id="SFLDS00014">
    <property type="entry name" value="RuBisCO"/>
    <property type="match status" value="1"/>
</dbReference>
<dbReference type="SFLD" id="SFLDG00301">
    <property type="entry name" value="RuBisCO-like_proteins"/>
    <property type="match status" value="1"/>
</dbReference>
<dbReference type="SUPFAM" id="SSF51649">
    <property type="entry name" value="RuBisCo, C-terminal domain"/>
    <property type="match status" value="1"/>
</dbReference>
<dbReference type="SUPFAM" id="SSF54966">
    <property type="entry name" value="RuBisCO, large subunit, small (N-terminal) domain"/>
    <property type="match status" value="1"/>
</dbReference>
<dbReference type="PROSITE" id="PS00157">
    <property type="entry name" value="RUBISCO_LARGE"/>
    <property type="match status" value="1"/>
</dbReference>
<comment type="function">
    <text evidence="1">RuBisCO catalyzes two reactions: the carboxylation of D-ribulose 1,5-bisphosphate, the primary event in carbon dioxide fixation, as well as the oxidative fragmentation of the pentose substrate in the photorespiration process. Both reactions occur simultaneously and in competition at the same active site.</text>
</comment>
<comment type="catalytic activity">
    <reaction evidence="1">
        <text>2 (2R)-3-phosphoglycerate + 2 H(+) = D-ribulose 1,5-bisphosphate + CO2 + H2O</text>
        <dbReference type="Rhea" id="RHEA:23124"/>
        <dbReference type="ChEBI" id="CHEBI:15377"/>
        <dbReference type="ChEBI" id="CHEBI:15378"/>
        <dbReference type="ChEBI" id="CHEBI:16526"/>
        <dbReference type="ChEBI" id="CHEBI:57870"/>
        <dbReference type="ChEBI" id="CHEBI:58272"/>
        <dbReference type="EC" id="4.1.1.39"/>
    </reaction>
</comment>
<comment type="catalytic activity">
    <reaction evidence="1">
        <text>D-ribulose 1,5-bisphosphate + O2 = 2-phosphoglycolate + (2R)-3-phosphoglycerate + 2 H(+)</text>
        <dbReference type="Rhea" id="RHEA:36631"/>
        <dbReference type="ChEBI" id="CHEBI:15378"/>
        <dbReference type="ChEBI" id="CHEBI:15379"/>
        <dbReference type="ChEBI" id="CHEBI:57870"/>
        <dbReference type="ChEBI" id="CHEBI:58033"/>
        <dbReference type="ChEBI" id="CHEBI:58272"/>
    </reaction>
</comment>
<comment type="cofactor">
    <cofactor evidence="1">
        <name>Mg(2+)</name>
        <dbReference type="ChEBI" id="CHEBI:18420"/>
    </cofactor>
    <text evidence="1">Binds 1 Mg(2+) ion per subunit.</text>
</comment>
<comment type="subunit">
    <text evidence="1">Heterohexadecamer of 8 large chains and 8 small chains; disulfide-linked. The disulfide link is formed within the large subunit homodimers.</text>
</comment>
<comment type="subcellular location">
    <subcellularLocation>
        <location evidence="1">Carboxysome</location>
    </subcellularLocation>
</comment>
<comment type="PTM">
    <text evidence="1">The disulfide bond which can form in the large chain dimeric partners within the hexadecamer appears to be associated with oxidative stress and protein turnover.</text>
</comment>
<comment type="miscellaneous">
    <text evidence="1">The basic functional RuBisCO is composed of a large chain homodimer in a 'head-to-tail' conformation. In form I RuBisCO this homodimer is arranged in a barrel-like tetramer with the small subunits forming a tetrameric 'cap' on each end of the 'barrel'.</text>
</comment>
<comment type="similarity">
    <text evidence="1">Belongs to the RuBisCO large chain family. Type I subfamily.</text>
</comment>
<evidence type="ECO:0000255" key="1">
    <source>
        <dbReference type="HAMAP-Rule" id="MF_01338"/>
    </source>
</evidence>
<proteinExistence type="inferred from homology"/>
<sequence>MVQAKSKGFQAGVKDYRLTYYTPDYTPKDTDLLACFRVTPQPGVPPEEAGAAVAAESSTGTWTTVWTDNLTDLDRYKGRCYDIEPVPNEDNQFFCFVAYPLDLFEEGSVTNILTSIVGNVFGFKALRGLRLEDIRFPVALIKTFQGPPHGITVERDKLNKYGRPLLGCTIKPKLGLSAKNYGRAVYECLRGGLDFTKDDENINSQPFMRWRDRFLFVQEAIVKSQAETNEVKGHYLNVTAPTCEQMMQRAEFAAEIKTPIIMHDYLTGGFTANTTLAKFCRDKGLLLHIHRAMHAVIDRQKNHGIHFRVLAKCLRLSGGDHLHSGTVVGKLEGERGITMGFVDLMREDYVEEDRARGIFFTQDYASLPGVMPVASGGIHVWHMPALVEIFGDDSCLQFGGGTLGHPWGNAPGATANRVALEACIQARNEGRSLAREGNDVIREACRWSPELAAACELWKEIKFEFEAMDTL</sequence>
<reference key="1">
    <citation type="journal article" date="2007" name="DNA Res.">
        <title>Complete genomic structure of the bloom-forming toxic cyanobacterium Microcystis aeruginosa NIES-843.</title>
        <authorList>
            <person name="Kaneko T."/>
            <person name="Nakajima N."/>
            <person name="Okamoto S."/>
            <person name="Suzuki I."/>
            <person name="Tanabe Y."/>
            <person name="Tamaoki M."/>
            <person name="Nakamura Y."/>
            <person name="Kasai F."/>
            <person name="Watanabe A."/>
            <person name="Kawashima K."/>
            <person name="Kishida Y."/>
            <person name="Ono A."/>
            <person name="Shimizu Y."/>
            <person name="Takahashi C."/>
            <person name="Minami C."/>
            <person name="Fujishiro T."/>
            <person name="Kohara M."/>
            <person name="Katoh M."/>
            <person name="Nakazaki N."/>
            <person name="Nakayama S."/>
            <person name="Yamada M."/>
            <person name="Tabata S."/>
            <person name="Watanabe M.M."/>
        </authorList>
    </citation>
    <scope>NUCLEOTIDE SEQUENCE [LARGE SCALE GENOMIC DNA]</scope>
    <source>
        <strain>NIES-843 / IAM M-247</strain>
    </source>
</reference>
<keyword id="KW-1283">Bacterial microcompartment</keyword>
<keyword id="KW-0113">Calvin cycle</keyword>
<keyword id="KW-0120">Carbon dioxide fixation</keyword>
<keyword id="KW-1282">Carboxysome</keyword>
<keyword id="KW-1015">Disulfide bond</keyword>
<keyword id="KW-0456">Lyase</keyword>
<keyword id="KW-0460">Magnesium</keyword>
<keyword id="KW-0479">Metal-binding</keyword>
<keyword id="KW-0503">Monooxygenase</keyword>
<keyword id="KW-0560">Oxidoreductase</keyword>
<keyword id="KW-0601">Photorespiration</keyword>
<keyword id="KW-0602">Photosynthesis</keyword>
<protein>
    <recommendedName>
        <fullName evidence="1">Ribulose bisphosphate carboxylase large chain</fullName>
        <shortName evidence="1">RuBisCO large subunit</shortName>
        <ecNumber evidence="1">4.1.1.39</ecNumber>
    </recommendedName>
</protein>
<organism>
    <name type="scientific">Microcystis aeruginosa (strain NIES-843 / IAM M-2473)</name>
    <dbReference type="NCBI Taxonomy" id="449447"/>
    <lineage>
        <taxon>Bacteria</taxon>
        <taxon>Bacillati</taxon>
        <taxon>Cyanobacteriota</taxon>
        <taxon>Cyanophyceae</taxon>
        <taxon>Oscillatoriophycideae</taxon>
        <taxon>Chroococcales</taxon>
        <taxon>Microcystaceae</taxon>
        <taxon>Microcystis</taxon>
    </lineage>
</organism>
<name>RBL_MICAN</name>
<accession>B0JVL8</accession>
<gene>
    <name evidence="1" type="primary">cbbL</name>
    <name evidence="1" type="synonym">rbcL</name>
    <name type="ordered locus">MAE_47890</name>
</gene>